<feature type="chain" id="PRO_0000162680" description="Ribosomal large subunit pseudouridine synthase C">
    <location>
        <begin position="1"/>
        <end position="315"/>
    </location>
</feature>
<feature type="domain" description="S4 RNA-binding" evidence="2">
    <location>
        <begin position="20"/>
        <end position="93"/>
    </location>
</feature>
<feature type="active site" evidence="1">
    <location>
        <position position="145"/>
    </location>
</feature>
<organism>
    <name type="scientific">Vibrio parahaemolyticus serotype O3:K6 (strain RIMD 2210633)</name>
    <dbReference type="NCBI Taxonomy" id="223926"/>
    <lineage>
        <taxon>Bacteria</taxon>
        <taxon>Pseudomonadati</taxon>
        <taxon>Pseudomonadota</taxon>
        <taxon>Gammaproteobacteria</taxon>
        <taxon>Vibrionales</taxon>
        <taxon>Vibrionaceae</taxon>
        <taxon>Vibrio</taxon>
    </lineage>
</organism>
<name>RLUC_VIBPA</name>
<proteinExistence type="inferred from homology"/>
<gene>
    <name type="primary">rluC</name>
    <name type="ordered locus">VP2061</name>
</gene>
<comment type="function">
    <text evidence="1">Responsible for synthesis of pseudouridine from uracil at positions 955, 2504 and 2580 in 23S ribosomal RNA.</text>
</comment>
<comment type="catalytic activity">
    <reaction>
        <text>uridine(955/2504/2580) in 23S rRNA = pseudouridine(955/2504/2580) in 23S rRNA</text>
        <dbReference type="Rhea" id="RHEA:42528"/>
        <dbReference type="Rhea" id="RHEA-COMP:10099"/>
        <dbReference type="Rhea" id="RHEA-COMP:10100"/>
        <dbReference type="ChEBI" id="CHEBI:65314"/>
        <dbReference type="ChEBI" id="CHEBI:65315"/>
        <dbReference type="EC" id="5.4.99.24"/>
    </reaction>
</comment>
<comment type="similarity">
    <text evidence="3">Belongs to the pseudouridine synthase RluA family.</text>
</comment>
<reference key="1">
    <citation type="journal article" date="2003" name="Lancet">
        <title>Genome sequence of Vibrio parahaemolyticus: a pathogenic mechanism distinct from that of V. cholerae.</title>
        <authorList>
            <person name="Makino K."/>
            <person name="Oshima K."/>
            <person name="Kurokawa K."/>
            <person name="Yokoyama K."/>
            <person name="Uda T."/>
            <person name="Tagomori K."/>
            <person name="Iijima Y."/>
            <person name="Najima M."/>
            <person name="Nakano M."/>
            <person name="Yamashita A."/>
            <person name="Kubota Y."/>
            <person name="Kimura S."/>
            <person name="Yasunaga T."/>
            <person name="Honda T."/>
            <person name="Shinagawa H."/>
            <person name="Hattori M."/>
            <person name="Iida T."/>
        </authorList>
    </citation>
    <scope>NUCLEOTIDE SEQUENCE [LARGE SCALE GENOMIC DNA]</scope>
    <source>
        <strain>RIMD 2210633</strain>
    </source>
</reference>
<protein>
    <recommendedName>
        <fullName>Ribosomal large subunit pseudouridine synthase C</fullName>
        <ecNumber>5.4.99.24</ecNumber>
    </recommendedName>
    <alternativeName>
        <fullName>23S rRNA pseudouridine(955/2504/2580) synthase</fullName>
    </alternativeName>
    <alternativeName>
        <fullName>rRNA pseudouridylate synthase C</fullName>
    </alternativeName>
    <alternativeName>
        <fullName>rRNA-uridine isomerase C</fullName>
    </alternativeName>
</protein>
<evidence type="ECO:0000250" key="1"/>
<evidence type="ECO:0000255" key="2">
    <source>
        <dbReference type="PROSITE-ProRule" id="PRU00182"/>
    </source>
</evidence>
<evidence type="ECO:0000305" key="3"/>
<dbReference type="EC" id="5.4.99.24"/>
<dbReference type="EMBL" id="BA000031">
    <property type="protein sequence ID" value="BAC60324.1"/>
    <property type="molecule type" value="Genomic_DNA"/>
</dbReference>
<dbReference type="RefSeq" id="NP_798440.1">
    <property type="nucleotide sequence ID" value="NC_004603.1"/>
</dbReference>
<dbReference type="RefSeq" id="WP_005461586.1">
    <property type="nucleotide sequence ID" value="NC_004603.1"/>
</dbReference>
<dbReference type="SMR" id="Q87N15"/>
<dbReference type="GeneID" id="1189572"/>
<dbReference type="KEGG" id="vpa:VP2061"/>
<dbReference type="PATRIC" id="fig|223926.6.peg.1971"/>
<dbReference type="eggNOG" id="COG0564">
    <property type="taxonomic scope" value="Bacteria"/>
</dbReference>
<dbReference type="HOGENOM" id="CLU_016902_1_1_6"/>
<dbReference type="Proteomes" id="UP000002493">
    <property type="component" value="Chromosome 1"/>
</dbReference>
<dbReference type="GO" id="GO:0160141">
    <property type="term" value="F:23S rRNA pseudouridine(955/2504/2580) synthase activity"/>
    <property type="evidence" value="ECO:0007669"/>
    <property type="project" value="UniProtKB-EC"/>
</dbReference>
<dbReference type="GO" id="GO:0003723">
    <property type="term" value="F:RNA binding"/>
    <property type="evidence" value="ECO:0007669"/>
    <property type="project" value="UniProtKB-KW"/>
</dbReference>
<dbReference type="GO" id="GO:0000455">
    <property type="term" value="P:enzyme-directed rRNA pseudouridine synthesis"/>
    <property type="evidence" value="ECO:0007669"/>
    <property type="project" value="TreeGrafter"/>
</dbReference>
<dbReference type="CDD" id="cd02869">
    <property type="entry name" value="PseudoU_synth_RluA_like"/>
    <property type="match status" value="1"/>
</dbReference>
<dbReference type="CDD" id="cd00165">
    <property type="entry name" value="S4"/>
    <property type="match status" value="1"/>
</dbReference>
<dbReference type="FunFam" id="3.10.290.10:FF:000010">
    <property type="entry name" value="Pseudouridine synthase"/>
    <property type="match status" value="1"/>
</dbReference>
<dbReference type="Gene3D" id="3.30.2350.10">
    <property type="entry name" value="Pseudouridine synthase"/>
    <property type="match status" value="1"/>
</dbReference>
<dbReference type="Gene3D" id="3.10.290.10">
    <property type="entry name" value="RNA-binding S4 domain"/>
    <property type="match status" value="1"/>
</dbReference>
<dbReference type="InterPro" id="IPR020103">
    <property type="entry name" value="PsdUridine_synth_cat_dom_sf"/>
</dbReference>
<dbReference type="InterPro" id="IPR006224">
    <property type="entry name" value="PsdUridine_synth_RluA-like_CS"/>
</dbReference>
<dbReference type="InterPro" id="IPR006225">
    <property type="entry name" value="PsdUridine_synth_RluC/D"/>
</dbReference>
<dbReference type="InterPro" id="IPR006145">
    <property type="entry name" value="PsdUridine_synth_RsuA/RluA"/>
</dbReference>
<dbReference type="InterPro" id="IPR050188">
    <property type="entry name" value="RluA_PseudoU_synthase"/>
</dbReference>
<dbReference type="InterPro" id="IPR002942">
    <property type="entry name" value="S4_RNA-bd"/>
</dbReference>
<dbReference type="InterPro" id="IPR036986">
    <property type="entry name" value="S4_RNA-bd_sf"/>
</dbReference>
<dbReference type="NCBIfam" id="NF008249">
    <property type="entry name" value="PRK11025.1"/>
    <property type="match status" value="1"/>
</dbReference>
<dbReference type="NCBIfam" id="TIGR00005">
    <property type="entry name" value="rluA_subfam"/>
    <property type="match status" value="1"/>
</dbReference>
<dbReference type="PANTHER" id="PTHR21600">
    <property type="entry name" value="MITOCHONDRIAL RNA PSEUDOURIDINE SYNTHASE"/>
    <property type="match status" value="1"/>
</dbReference>
<dbReference type="PANTHER" id="PTHR21600:SF92">
    <property type="entry name" value="RIBOSOMAL LARGE SUBUNIT PSEUDOURIDINE SYNTHASE C"/>
    <property type="match status" value="1"/>
</dbReference>
<dbReference type="Pfam" id="PF00849">
    <property type="entry name" value="PseudoU_synth_2"/>
    <property type="match status" value="1"/>
</dbReference>
<dbReference type="Pfam" id="PF01479">
    <property type="entry name" value="S4"/>
    <property type="match status" value="1"/>
</dbReference>
<dbReference type="SMART" id="SM00363">
    <property type="entry name" value="S4"/>
    <property type="match status" value="1"/>
</dbReference>
<dbReference type="SUPFAM" id="SSF55174">
    <property type="entry name" value="Alpha-L RNA-binding motif"/>
    <property type="match status" value="1"/>
</dbReference>
<dbReference type="SUPFAM" id="SSF55120">
    <property type="entry name" value="Pseudouridine synthase"/>
    <property type="match status" value="1"/>
</dbReference>
<dbReference type="PROSITE" id="PS01129">
    <property type="entry name" value="PSI_RLU"/>
    <property type="match status" value="1"/>
</dbReference>
<dbReference type="PROSITE" id="PS50889">
    <property type="entry name" value="S4"/>
    <property type="match status" value="1"/>
</dbReference>
<keyword id="KW-0413">Isomerase</keyword>
<keyword id="KW-0694">RNA-binding</keyword>
<keyword id="KW-0698">rRNA processing</keyword>
<accession>Q87N15</accession>
<sequence>MSEIRTQVQFVDIDEDMAGQRIDNFLRNQLKDIPKSMIYRIVRKGEVRVNKKRIKAEYKLKAGDLVRIPPVTVEKKEEDVAPSTKLNKVAELEHMIIYEDDHMLILNKPSGTAVHGGSGLKFGAIEALRALRPQARFLELVHRIDRDTSGILLVAKKRSALRHLQAQFREKTVKKFYFALVMGQWKSSCKVVNAPLLKNEVNSIVRVNPNGKPSETRFKILEKFEQATLIQASPITGRTHQIRVHTQYTGHPIAWDDRYGDRRFDAYTGQLGLDRLFLHAANIKFQHPSNDEWMEINAPMESKLEKVLVGLRKAN</sequence>